<keyword id="KW-0378">Hydrolase</keyword>
<keyword id="KW-0546">Nucleotide metabolism</keyword>
<keyword id="KW-0547">Nucleotide-binding</keyword>
<keyword id="KW-1185">Reference proteome</keyword>
<gene>
    <name evidence="1" type="primary">dcd</name>
    <name type="ordered locus">BQ2027_MB0329</name>
</gene>
<protein>
    <recommendedName>
        <fullName evidence="1">dCTP deaminase, dUMP-forming</fullName>
        <ecNumber evidence="1">3.5.4.30</ecNumber>
    </recommendedName>
    <alternativeName>
        <fullName evidence="1">Bifunctional dCTP deaminase:dUTPase</fullName>
    </alternativeName>
    <alternativeName>
        <fullName evidence="1">DCD-DUT</fullName>
    </alternativeName>
</protein>
<accession>Q7U297</accession>
<accession>A0A1R3XW30</accession>
<accession>X2BEL5</accession>
<name>DCDB_MYCBO</name>
<comment type="function">
    <text evidence="1">Bifunctional enzyme that catalyzes both the deamination of dCTP to dUTP and the hydrolysis of dUTP to dUMP without releasing the toxic dUTP intermediate.</text>
</comment>
<comment type="catalytic activity">
    <reaction evidence="1">
        <text>dCTP + 2 H2O = dUMP + NH4(+) + diphosphate</text>
        <dbReference type="Rhea" id="RHEA:19205"/>
        <dbReference type="ChEBI" id="CHEBI:15377"/>
        <dbReference type="ChEBI" id="CHEBI:28938"/>
        <dbReference type="ChEBI" id="CHEBI:33019"/>
        <dbReference type="ChEBI" id="CHEBI:61481"/>
        <dbReference type="ChEBI" id="CHEBI:246422"/>
        <dbReference type="EC" id="3.5.4.30"/>
    </reaction>
</comment>
<comment type="pathway">
    <text evidence="1">Pyrimidine metabolism; dUMP biosynthesis; dUMP from dCTP: step 1/1.</text>
</comment>
<comment type="subunit">
    <text evidence="1">Homotrimer.</text>
</comment>
<comment type="similarity">
    <text evidence="1">Belongs to the dCTP deaminase family.</text>
</comment>
<proteinExistence type="inferred from homology"/>
<dbReference type="EC" id="3.5.4.30" evidence="1"/>
<dbReference type="EMBL" id="LT708304">
    <property type="protein sequence ID" value="SIT98873.1"/>
    <property type="molecule type" value="Genomic_DNA"/>
</dbReference>
<dbReference type="RefSeq" id="NP_853993.1">
    <property type="nucleotide sequence ID" value="NC_002945.3"/>
</dbReference>
<dbReference type="RefSeq" id="WP_003401638.1">
    <property type="nucleotide sequence ID" value="NC_002945.4"/>
</dbReference>
<dbReference type="SMR" id="Q7U297"/>
<dbReference type="PATRIC" id="fig|233413.5.peg.359"/>
<dbReference type="UniPathway" id="UPA00610">
    <property type="reaction ID" value="UER00667"/>
</dbReference>
<dbReference type="Proteomes" id="UP000001419">
    <property type="component" value="Chromosome"/>
</dbReference>
<dbReference type="GO" id="GO:0033973">
    <property type="term" value="F:dCTP deaminase (dUMP-forming) activity"/>
    <property type="evidence" value="ECO:0007669"/>
    <property type="project" value="UniProtKB-UniRule"/>
</dbReference>
<dbReference type="GO" id="GO:0008829">
    <property type="term" value="F:dCTP deaminase activity"/>
    <property type="evidence" value="ECO:0007669"/>
    <property type="project" value="InterPro"/>
</dbReference>
<dbReference type="GO" id="GO:0000166">
    <property type="term" value="F:nucleotide binding"/>
    <property type="evidence" value="ECO:0007669"/>
    <property type="project" value="UniProtKB-KW"/>
</dbReference>
<dbReference type="GO" id="GO:0006226">
    <property type="term" value="P:dUMP biosynthetic process"/>
    <property type="evidence" value="ECO:0007669"/>
    <property type="project" value="UniProtKB-UniRule"/>
</dbReference>
<dbReference type="GO" id="GO:0006229">
    <property type="term" value="P:dUTP biosynthetic process"/>
    <property type="evidence" value="ECO:0007669"/>
    <property type="project" value="InterPro"/>
</dbReference>
<dbReference type="GO" id="GO:0015949">
    <property type="term" value="P:nucleobase-containing small molecule interconversion"/>
    <property type="evidence" value="ECO:0007669"/>
    <property type="project" value="TreeGrafter"/>
</dbReference>
<dbReference type="CDD" id="cd07557">
    <property type="entry name" value="trimeric_dUTPase"/>
    <property type="match status" value="1"/>
</dbReference>
<dbReference type="FunFam" id="2.70.40.10:FF:000005">
    <property type="entry name" value="dCTP deaminase, dUMP-forming"/>
    <property type="match status" value="1"/>
</dbReference>
<dbReference type="Gene3D" id="2.70.40.10">
    <property type="match status" value="1"/>
</dbReference>
<dbReference type="HAMAP" id="MF_00146">
    <property type="entry name" value="dCTP_deaminase"/>
    <property type="match status" value="1"/>
</dbReference>
<dbReference type="InterPro" id="IPR011962">
    <property type="entry name" value="dCTP_deaminase"/>
</dbReference>
<dbReference type="InterPro" id="IPR036157">
    <property type="entry name" value="dUTPase-like_sf"/>
</dbReference>
<dbReference type="InterPro" id="IPR033704">
    <property type="entry name" value="dUTPase_trimeric"/>
</dbReference>
<dbReference type="NCBIfam" id="TIGR02274">
    <property type="entry name" value="dCTP_deam"/>
    <property type="match status" value="1"/>
</dbReference>
<dbReference type="PANTHER" id="PTHR42680">
    <property type="entry name" value="DCTP DEAMINASE"/>
    <property type="match status" value="1"/>
</dbReference>
<dbReference type="PANTHER" id="PTHR42680:SF3">
    <property type="entry name" value="DCTP DEAMINASE"/>
    <property type="match status" value="1"/>
</dbReference>
<dbReference type="Pfam" id="PF22769">
    <property type="entry name" value="DCD"/>
    <property type="match status" value="1"/>
</dbReference>
<dbReference type="SUPFAM" id="SSF51283">
    <property type="entry name" value="dUTPase-like"/>
    <property type="match status" value="1"/>
</dbReference>
<reference key="1">
    <citation type="journal article" date="2003" name="Proc. Natl. Acad. Sci. U.S.A.">
        <title>The complete genome sequence of Mycobacterium bovis.</title>
        <authorList>
            <person name="Garnier T."/>
            <person name="Eiglmeier K."/>
            <person name="Camus J.-C."/>
            <person name="Medina N."/>
            <person name="Mansoor H."/>
            <person name="Pryor M."/>
            <person name="Duthoy S."/>
            <person name="Grondin S."/>
            <person name="Lacroix C."/>
            <person name="Monsempe C."/>
            <person name="Simon S."/>
            <person name="Harris B."/>
            <person name="Atkin R."/>
            <person name="Doggett J."/>
            <person name="Mayes R."/>
            <person name="Keating L."/>
            <person name="Wheeler P.R."/>
            <person name="Parkhill J."/>
            <person name="Barrell B.G."/>
            <person name="Cole S.T."/>
            <person name="Gordon S.V."/>
            <person name="Hewinson R.G."/>
        </authorList>
    </citation>
    <scope>NUCLEOTIDE SEQUENCE [LARGE SCALE GENOMIC DNA]</scope>
    <source>
        <strain>ATCC BAA-935 / AF2122/97</strain>
    </source>
</reference>
<reference key="2">
    <citation type="journal article" date="2017" name="Genome Announc.">
        <title>Updated reference genome sequence and annotation of Mycobacterium bovis AF2122/97.</title>
        <authorList>
            <person name="Malone K.M."/>
            <person name="Farrell D."/>
            <person name="Stuber T.P."/>
            <person name="Schubert O.T."/>
            <person name="Aebersold R."/>
            <person name="Robbe-Austerman S."/>
            <person name="Gordon S.V."/>
        </authorList>
    </citation>
    <scope>NUCLEOTIDE SEQUENCE [LARGE SCALE GENOMIC DNA]</scope>
    <scope>GENOME REANNOTATION</scope>
    <source>
        <strain>ATCC BAA-935 / AF2122/97</strain>
    </source>
</reference>
<sequence length="190" mass="20810">MLLSDRDLRAEISSGRLGIDPFDDTLVQPSSIDVRLDCLFRVFNNTRYTHIDPAKQQDELTSLVQPVDGEPFVLHPGEFVLGSTLELFTLPDNLAGRLEGKSSLGRLGLLTHSTAGFIDPGFSGHITLELSNVANLPITLWPGMKIGQLCMLRLTSPSEHPYGSSRAGSKYQGQRGPTPSRSCQNFIRST</sequence>
<evidence type="ECO:0000255" key="1">
    <source>
        <dbReference type="HAMAP-Rule" id="MF_00146"/>
    </source>
</evidence>
<evidence type="ECO:0000256" key="2">
    <source>
        <dbReference type="SAM" id="MobiDB-lite"/>
    </source>
</evidence>
<organism>
    <name type="scientific">Mycobacterium bovis (strain ATCC BAA-935 / AF2122/97)</name>
    <dbReference type="NCBI Taxonomy" id="233413"/>
    <lineage>
        <taxon>Bacteria</taxon>
        <taxon>Bacillati</taxon>
        <taxon>Actinomycetota</taxon>
        <taxon>Actinomycetes</taxon>
        <taxon>Mycobacteriales</taxon>
        <taxon>Mycobacteriaceae</taxon>
        <taxon>Mycobacterium</taxon>
        <taxon>Mycobacterium tuberculosis complex</taxon>
    </lineage>
</organism>
<feature type="chain" id="PRO_0000155995" description="dCTP deaminase, dUMP-forming">
    <location>
        <begin position="1"/>
        <end position="190"/>
    </location>
</feature>
<feature type="region of interest" description="Disordered" evidence="2">
    <location>
        <begin position="160"/>
        <end position="190"/>
    </location>
</feature>
<feature type="compositionally biased region" description="Polar residues" evidence="2">
    <location>
        <begin position="171"/>
        <end position="190"/>
    </location>
</feature>
<feature type="active site" description="Proton donor/acceptor" evidence="1">
    <location>
        <position position="129"/>
    </location>
</feature>
<feature type="binding site" evidence="1">
    <location>
        <begin position="101"/>
        <end position="106"/>
    </location>
    <ligand>
        <name>dCTP</name>
        <dbReference type="ChEBI" id="CHEBI:61481"/>
    </ligand>
</feature>
<feature type="binding site" evidence="1">
    <location>
        <position position="119"/>
    </location>
    <ligand>
        <name>dCTP</name>
        <dbReference type="ChEBI" id="CHEBI:61481"/>
    </ligand>
</feature>
<feature type="binding site" evidence="1">
    <location>
        <begin position="127"/>
        <end position="129"/>
    </location>
    <ligand>
        <name>dCTP</name>
        <dbReference type="ChEBI" id="CHEBI:61481"/>
    </ligand>
</feature>
<feature type="binding site" evidence="1">
    <location>
        <position position="148"/>
    </location>
    <ligand>
        <name>dCTP</name>
        <dbReference type="ChEBI" id="CHEBI:61481"/>
    </ligand>
</feature>
<feature type="binding site" evidence="1">
    <location>
        <position position="162"/>
    </location>
    <ligand>
        <name>dCTP</name>
        <dbReference type="ChEBI" id="CHEBI:61481"/>
    </ligand>
</feature>
<feature type="binding site" evidence="1">
    <location>
        <position position="170"/>
    </location>
    <ligand>
        <name>dCTP</name>
        <dbReference type="ChEBI" id="CHEBI:61481"/>
    </ligand>
</feature>
<feature type="binding site" evidence="1">
    <location>
        <position position="174"/>
    </location>
    <ligand>
        <name>dCTP</name>
        <dbReference type="ChEBI" id="CHEBI:61481"/>
    </ligand>
</feature>
<feature type="site" description="Important for bifunctional activity" evidence="1">
    <location>
        <begin position="116"/>
        <end position="117"/>
    </location>
</feature>